<accession>Q54IM8</accession>
<gene>
    <name type="primary">acad8</name>
    <name type="ORF">DDB_G0288647</name>
</gene>
<dbReference type="EC" id="1.3.8.-" evidence="1"/>
<dbReference type="EMBL" id="AAFI02000119">
    <property type="protein sequence ID" value="EAL63127.1"/>
    <property type="molecule type" value="Genomic_DNA"/>
</dbReference>
<dbReference type="RefSeq" id="XP_636630.1">
    <property type="nucleotide sequence ID" value="XM_631538.1"/>
</dbReference>
<dbReference type="SMR" id="Q54IM8"/>
<dbReference type="FunCoup" id="Q54IM8">
    <property type="interactions" value="33"/>
</dbReference>
<dbReference type="STRING" id="44689.Q54IM8"/>
<dbReference type="PaxDb" id="44689-DDB0237710"/>
<dbReference type="EnsemblProtists" id="EAL63127">
    <property type="protein sequence ID" value="EAL63127"/>
    <property type="gene ID" value="DDB_G0288647"/>
</dbReference>
<dbReference type="GeneID" id="8626731"/>
<dbReference type="KEGG" id="ddi:DDB_G0288647"/>
<dbReference type="dictyBase" id="DDB_G0288647">
    <property type="gene designation" value="acad8"/>
</dbReference>
<dbReference type="VEuPathDB" id="AmoebaDB:DDB_G0288647"/>
<dbReference type="eggNOG" id="KOG0140">
    <property type="taxonomic scope" value="Eukaryota"/>
</dbReference>
<dbReference type="HOGENOM" id="CLU_018204_0_2_1"/>
<dbReference type="InParanoid" id="Q54IM8"/>
<dbReference type="OMA" id="NMATWML"/>
<dbReference type="PhylomeDB" id="Q54IM8"/>
<dbReference type="Reactome" id="R-DDI-70895">
    <property type="pathway name" value="Branched-chain amino acid catabolism"/>
</dbReference>
<dbReference type="Reactome" id="R-DDI-9837999">
    <property type="pathway name" value="Mitochondrial protein degradation"/>
</dbReference>
<dbReference type="UniPathway" id="UPA00362"/>
<dbReference type="PRO" id="PR:Q54IM8"/>
<dbReference type="Proteomes" id="UP000002195">
    <property type="component" value="Chromosome 5"/>
</dbReference>
<dbReference type="GO" id="GO:0005739">
    <property type="term" value="C:mitochondrion"/>
    <property type="evidence" value="ECO:0007669"/>
    <property type="project" value="UniProtKB-SubCell"/>
</dbReference>
<dbReference type="GO" id="GO:0050660">
    <property type="term" value="F:flavin adenine dinucleotide binding"/>
    <property type="evidence" value="ECO:0007669"/>
    <property type="project" value="InterPro"/>
</dbReference>
<dbReference type="GO" id="GO:0003853">
    <property type="term" value="F:short-chain 2-methyl fatty acyl-CoA dehydrogenase activity"/>
    <property type="evidence" value="ECO:0007669"/>
    <property type="project" value="RHEA"/>
</dbReference>
<dbReference type="GO" id="GO:0006629">
    <property type="term" value="P:lipid metabolic process"/>
    <property type="evidence" value="ECO:0007669"/>
    <property type="project" value="InterPro"/>
</dbReference>
<dbReference type="GO" id="GO:0006574">
    <property type="term" value="P:valine catabolic process"/>
    <property type="evidence" value="ECO:0007669"/>
    <property type="project" value="UniProtKB-UniPathway"/>
</dbReference>
<dbReference type="CDD" id="cd01162">
    <property type="entry name" value="IBD"/>
    <property type="match status" value="1"/>
</dbReference>
<dbReference type="FunFam" id="1.20.140.10:FF:000001">
    <property type="entry name" value="Acyl-CoA dehydrogenase"/>
    <property type="match status" value="1"/>
</dbReference>
<dbReference type="FunFam" id="1.10.540.10:FF:000026">
    <property type="entry name" value="Acyl-CoA dehydrogenase medium chain"/>
    <property type="match status" value="1"/>
</dbReference>
<dbReference type="FunFam" id="2.40.110.10:FF:000001">
    <property type="entry name" value="Acyl-CoA dehydrogenase, mitochondrial"/>
    <property type="match status" value="1"/>
</dbReference>
<dbReference type="Gene3D" id="1.10.540.10">
    <property type="entry name" value="Acyl-CoA dehydrogenase/oxidase, N-terminal domain"/>
    <property type="match status" value="1"/>
</dbReference>
<dbReference type="Gene3D" id="2.40.110.10">
    <property type="entry name" value="Butyryl-CoA Dehydrogenase, subunit A, domain 2"/>
    <property type="match status" value="1"/>
</dbReference>
<dbReference type="Gene3D" id="1.20.140.10">
    <property type="entry name" value="Butyryl-CoA Dehydrogenase, subunit A, domain 3"/>
    <property type="match status" value="1"/>
</dbReference>
<dbReference type="InterPro" id="IPR006089">
    <property type="entry name" value="Acyl-CoA_DH_CS"/>
</dbReference>
<dbReference type="InterPro" id="IPR006091">
    <property type="entry name" value="Acyl-CoA_Oxase/DH_mid-dom"/>
</dbReference>
<dbReference type="InterPro" id="IPR046373">
    <property type="entry name" value="Acyl-CoA_Oxase/DH_mid-dom_sf"/>
</dbReference>
<dbReference type="InterPro" id="IPR036250">
    <property type="entry name" value="AcylCo_DH-like_C"/>
</dbReference>
<dbReference type="InterPro" id="IPR009075">
    <property type="entry name" value="AcylCo_DH/oxidase_C"/>
</dbReference>
<dbReference type="InterPro" id="IPR013786">
    <property type="entry name" value="AcylCoA_DH/ox_N"/>
</dbReference>
<dbReference type="InterPro" id="IPR037069">
    <property type="entry name" value="AcylCoA_DH/ox_N_sf"/>
</dbReference>
<dbReference type="InterPro" id="IPR009100">
    <property type="entry name" value="AcylCoA_DH/oxidase_NM_dom_sf"/>
</dbReference>
<dbReference type="InterPro" id="IPR034178">
    <property type="entry name" value="IBD"/>
</dbReference>
<dbReference type="InterPro" id="IPR052547">
    <property type="entry name" value="Mito_Isobutyryl-CoADH"/>
</dbReference>
<dbReference type="PANTHER" id="PTHR43831">
    <property type="entry name" value="ISOBUTYRYL-COA DEHYDROGENASE"/>
    <property type="match status" value="1"/>
</dbReference>
<dbReference type="PANTHER" id="PTHR43831:SF1">
    <property type="entry name" value="ISOBUTYRYL-COA DEHYDROGENASE, MITOCHONDRIAL"/>
    <property type="match status" value="1"/>
</dbReference>
<dbReference type="Pfam" id="PF00441">
    <property type="entry name" value="Acyl-CoA_dh_1"/>
    <property type="match status" value="1"/>
</dbReference>
<dbReference type="Pfam" id="PF02770">
    <property type="entry name" value="Acyl-CoA_dh_M"/>
    <property type="match status" value="1"/>
</dbReference>
<dbReference type="Pfam" id="PF02771">
    <property type="entry name" value="Acyl-CoA_dh_N"/>
    <property type="match status" value="1"/>
</dbReference>
<dbReference type="PIRSF" id="PIRSF016578">
    <property type="entry name" value="HsaA"/>
    <property type="match status" value="1"/>
</dbReference>
<dbReference type="SUPFAM" id="SSF47203">
    <property type="entry name" value="Acyl-CoA dehydrogenase C-terminal domain-like"/>
    <property type="match status" value="1"/>
</dbReference>
<dbReference type="SUPFAM" id="SSF56645">
    <property type="entry name" value="Acyl-CoA dehydrogenase NM domain-like"/>
    <property type="match status" value="1"/>
</dbReference>
<dbReference type="PROSITE" id="PS00072">
    <property type="entry name" value="ACYL_COA_DH_1"/>
    <property type="match status" value="1"/>
</dbReference>
<dbReference type="PROSITE" id="PS00073">
    <property type="entry name" value="ACYL_COA_DH_2"/>
    <property type="match status" value="1"/>
</dbReference>
<sequence length="416" mass="45694">MISGLFKLSNKQSVLQNATKLVLQRRTFFNIVPNPSVGLTEDQKQFQSMALDFAQEKMKPFAEKWDKEEYFPRDVMREAAELGFGGIYVREDVGGSGLSRLDASIIIEALASADVSTTAFISIHNMCAGLIDIYGTEEQRKKFLPSLVSMEKIASYCLTEPGSGSDAGSLSTKATKDGDHYILNGSKAFISGGGDSEVYLVMVRTGAEKGPKGISCLLVEKDTPGLSFGKKEEKLGWNTQPTRALIFEDCRVPVGNLIGKEGQGFSIAMNALNGGRINIGACSLGGAQSCLVAARDHVKVRKQFNQPLEHFQAVQFKMADMATKLHASRIMIRNAAAMLDAKDPSAHVYIAMAKLFACDECFKVTDDSLQLFGGYGYLKDYPVERYLRDLRVHRILEGSDAVMRLIISRELSKDDH</sequence>
<keyword id="KW-0010">Activator</keyword>
<keyword id="KW-0101">Branched-chain amino acid catabolism</keyword>
<keyword id="KW-0274">FAD</keyword>
<keyword id="KW-0285">Flavoprotein</keyword>
<keyword id="KW-0496">Mitochondrion</keyword>
<keyword id="KW-0560">Oxidoreductase</keyword>
<keyword id="KW-1185">Reference proteome</keyword>
<keyword id="KW-0809">Transit peptide</keyword>
<reference key="1">
    <citation type="journal article" date="2005" name="Nature">
        <title>The genome of the social amoeba Dictyostelium discoideum.</title>
        <authorList>
            <person name="Eichinger L."/>
            <person name="Pachebat J.A."/>
            <person name="Gloeckner G."/>
            <person name="Rajandream M.A."/>
            <person name="Sucgang R."/>
            <person name="Berriman M."/>
            <person name="Song J."/>
            <person name="Olsen R."/>
            <person name="Szafranski K."/>
            <person name="Xu Q."/>
            <person name="Tunggal B."/>
            <person name="Kummerfeld S."/>
            <person name="Madera M."/>
            <person name="Konfortov B.A."/>
            <person name="Rivero F."/>
            <person name="Bankier A.T."/>
            <person name="Lehmann R."/>
            <person name="Hamlin N."/>
            <person name="Davies R."/>
            <person name="Gaudet P."/>
            <person name="Fey P."/>
            <person name="Pilcher K."/>
            <person name="Chen G."/>
            <person name="Saunders D."/>
            <person name="Sodergren E.J."/>
            <person name="Davis P."/>
            <person name="Kerhornou A."/>
            <person name="Nie X."/>
            <person name="Hall N."/>
            <person name="Anjard C."/>
            <person name="Hemphill L."/>
            <person name="Bason N."/>
            <person name="Farbrother P."/>
            <person name="Desany B."/>
            <person name="Just E."/>
            <person name="Morio T."/>
            <person name="Rost R."/>
            <person name="Churcher C.M."/>
            <person name="Cooper J."/>
            <person name="Haydock S."/>
            <person name="van Driessche N."/>
            <person name="Cronin A."/>
            <person name="Goodhead I."/>
            <person name="Muzny D.M."/>
            <person name="Mourier T."/>
            <person name="Pain A."/>
            <person name="Lu M."/>
            <person name="Harper D."/>
            <person name="Lindsay R."/>
            <person name="Hauser H."/>
            <person name="James K.D."/>
            <person name="Quiles M."/>
            <person name="Madan Babu M."/>
            <person name="Saito T."/>
            <person name="Buchrieser C."/>
            <person name="Wardroper A."/>
            <person name="Felder M."/>
            <person name="Thangavelu M."/>
            <person name="Johnson D."/>
            <person name="Knights A."/>
            <person name="Loulseged H."/>
            <person name="Mungall K.L."/>
            <person name="Oliver K."/>
            <person name="Price C."/>
            <person name="Quail M.A."/>
            <person name="Urushihara H."/>
            <person name="Hernandez J."/>
            <person name="Rabbinowitsch E."/>
            <person name="Steffen D."/>
            <person name="Sanders M."/>
            <person name="Ma J."/>
            <person name="Kohara Y."/>
            <person name="Sharp S."/>
            <person name="Simmonds M.N."/>
            <person name="Spiegler S."/>
            <person name="Tivey A."/>
            <person name="Sugano S."/>
            <person name="White B."/>
            <person name="Walker D."/>
            <person name="Woodward J.R."/>
            <person name="Winckler T."/>
            <person name="Tanaka Y."/>
            <person name="Shaulsky G."/>
            <person name="Schleicher M."/>
            <person name="Weinstock G.M."/>
            <person name="Rosenthal A."/>
            <person name="Cox E.C."/>
            <person name="Chisholm R.L."/>
            <person name="Gibbs R.A."/>
            <person name="Loomis W.F."/>
            <person name="Platzer M."/>
            <person name="Kay R.R."/>
            <person name="Williams J.G."/>
            <person name="Dear P.H."/>
            <person name="Noegel A.A."/>
            <person name="Barrell B.G."/>
            <person name="Kuspa A."/>
        </authorList>
    </citation>
    <scope>NUCLEOTIDE SEQUENCE [LARGE SCALE GENOMIC DNA]</scope>
    <source>
        <strain>AX4</strain>
    </source>
</reference>
<protein>
    <recommendedName>
        <fullName>Isobutyryl-CoA dehydrogenase, mitochondrial</fullName>
        <ecNumber evidence="1">1.3.8.-</ecNumber>
    </recommendedName>
    <alternativeName>
        <fullName>Acyl-CoA dehydrogenase family member 8 homolog</fullName>
    </alternativeName>
</protein>
<comment type="function">
    <text evidence="1">Isobutyryl-CoA dehydrogenase which catalyzes one of the steps of the valine catabolic pathway. To a lesser extent, is also able to catalyze the oxidation of (2S)-2-methylbutanoyl-CoA.</text>
</comment>
<comment type="catalytic activity">
    <reaction evidence="1">
        <text>2-methylpropanoyl-CoA + oxidized [electron-transfer flavoprotein] + H(+) = 2-methylpropenoyl-CoA + reduced [electron-transfer flavoprotein]</text>
        <dbReference type="Rhea" id="RHEA:44180"/>
        <dbReference type="Rhea" id="RHEA-COMP:10685"/>
        <dbReference type="Rhea" id="RHEA-COMP:10686"/>
        <dbReference type="ChEBI" id="CHEBI:15378"/>
        <dbReference type="ChEBI" id="CHEBI:57338"/>
        <dbReference type="ChEBI" id="CHEBI:57692"/>
        <dbReference type="ChEBI" id="CHEBI:58307"/>
        <dbReference type="ChEBI" id="CHEBI:62500"/>
    </reaction>
    <physiologicalReaction direction="left-to-right" evidence="1">
        <dbReference type="Rhea" id="RHEA:44181"/>
    </physiologicalReaction>
</comment>
<comment type="catalytic activity">
    <reaction evidence="1">
        <text>(2S)-2-methylbutanoyl-CoA + oxidized [electron-transfer flavoprotein] + H(+) = (2E)-2-methylbut-2-enoyl-CoA + reduced [electron-transfer flavoprotein]</text>
        <dbReference type="Rhea" id="RHEA:48256"/>
        <dbReference type="Rhea" id="RHEA-COMP:10685"/>
        <dbReference type="Rhea" id="RHEA-COMP:10686"/>
        <dbReference type="ChEBI" id="CHEBI:15378"/>
        <dbReference type="ChEBI" id="CHEBI:57337"/>
        <dbReference type="ChEBI" id="CHEBI:57692"/>
        <dbReference type="ChEBI" id="CHEBI:58307"/>
        <dbReference type="ChEBI" id="CHEBI:88166"/>
    </reaction>
    <physiologicalReaction direction="left-to-right" evidence="1">
        <dbReference type="Rhea" id="RHEA:48257"/>
    </physiologicalReaction>
</comment>
<comment type="catalytic activity">
    <reaction evidence="1">
        <text>propanoyl-CoA + oxidized [electron-transfer flavoprotein] + H(+) = acryloyl-CoA + reduced [electron-transfer flavoprotein]</text>
        <dbReference type="Rhea" id="RHEA:31287"/>
        <dbReference type="Rhea" id="RHEA-COMP:10685"/>
        <dbReference type="Rhea" id="RHEA-COMP:10686"/>
        <dbReference type="ChEBI" id="CHEBI:15378"/>
        <dbReference type="ChEBI" id="CHEBI:57367"/>
        <dbReference type="ChEBI" id="CHEBI:57392"/>
        <dbReference type="ChEBI" id="CHEBI:57692"/>
        <dbReference type="ChEBI" id="CHEBI:58307"/>
    </reaction>
    <physiologicalReaction direction="left-to-right" evidence="1">
        <dbReference type="Rhea" id="RHEA:31288"/>
    </physiologicalReaction>
</comment>
<comment type="cofactor">
    <cofactor evidence="1">
        <name>FAD</name>
        <dbReference type="ChEBI" id="CHEBI:57692"/>
    </cofactor>
</comment>
<comment type="pathway">
    <text evidence="1">Amino-acid degradation; L-valine degradation.</text>
</comment>
<comment type="subunit">
    <text evidence="1">Homotetramer.</text>
</comment>
<comment type="subcellular location">
    <subcellularLocation>
        <location evidence="1">Mitochondrion</location>
    </subcellularLocation>
</comment>
<comment type="similarity">
    <text evidence="3">Belongs to the acyl-CoA dehydrogenase family.</text>
</comment>
<evidence type="ECO:0000250" key="1">
    <source>
        <dbReference type="UniProtKB" id="Q9UKU7"/>
    </source>
</evidence>
<evidence type="ECO:0000255" key="2"/>
<evidence type="ECO:0000305" key="3"/>
<feature type="transit peptide" description="Mitochondrion" evidence="2">
    <location>
        <begin position="1"/>
        <end position="21"/>
    </location>
</feature>
<feature type="chain" id="PRO_0000328143" description="Isobutyryl-CoA dehydrogenase, mitochondrial">
    <location>
        <begin position="22"/>
        <end position="416"/>
    </location>
</feature>
<feature type="active site" description="Proton acceptor" evidence="1">
    <location>
        <position position="397"/>
    </location>
</feature>
<feature type="binding site" description="in other chain" evidence="1">
    <location>
        <begin position="156"/>
        <end position="165"/>
    </location>
    <ligand>
        <name>FAD</name>
        <dbReference type="ChEBI" id="CHEBI:57692"/>
        <note>ligand shared between dimeric partners</note>
    </ligand>
</feature>
<feature type="binding site" evidence="1">
    <location>
        <position position="165"/>
    </location>
    <ligand>
        <name>substrate</name>
    </ligand>
</feature>
<feature type="binding site" description="in other chain" evidence="1">
    <location>
        <begin position="189"/>
        <end position="191"/>
    </location>
    <ligand>
        <name>FAD</name>
        <dbReference type="ChEBI" id="CHEBI:57692"/>
        <note>ligand shared between dimeric partners</note>
    </ligand>
</feature>
<feature type="binding site" evidence="1">
    <location>
        <begin position="273"/>
        <end position="276"/>
    </location>
    <ligand>
        <name>substrate</name>
    </ligand>
</feature>
<feature type="binding site" evidence="1">
    <location>
        <position position="301"/>
    </location>
    <ligand>
        <name>FAD</name>
        <dbReference type="ChEBI" id="CHEBI:57692"/>
        <note>ligand shared between dimeric partners</note>
    </ligand>
</feature>
<feature type="binding site" evidence="1">
    <location>
        <begin position="311"/>
        <end position="312"/>
    </location>
    <ligand>
        <name>FAD</name>
        <dbReference type="ChEBI" id="CHEBI:57692"/>
        <note>ligand shared between dimeric partners</note>
    </ligand>
</feature>
<feature type="binding site" evidence="1">
    <location>
        <begin position="370"/>
        <end position="374"/>
    </location>
    <ligand>
        <name>FAD</name>
        <dbReference type="ChEBI" id="CHEBI:57692"/>
        <note>ligand shared between dimeric partners</note>
    </ligand>
</feature>
<feature type="binding site" description="in other chain" evidence="1">
    <location>
        <begin position="399"/>
        <end position="401"/>
    </location>
    <ligand>
        <name>FAD</name>
        <dbReference type="ChEBI" id="CHEBI:57692"/>
        <note>ligand shared between dimeric partners</note>
    </ligand>
</feature>
<feature type="binding site" evidence="1">
    <location>
        <position position="409"/>
    </location>
    <ligand>
        <name>substrate</name>
    </ligand>
</feature>
<proteinExistence type="inferred from homology"/>
<name>ACAD8_DICDI</name>
<organism>
    <name type="scientific">Dictyostelium discoideum</name>
    <name type="common">Social amoeba</name>
    <dbReference type="NCBI Taxonomy" id="44689"/>
    <lineage>
        <taxon>Eukaryota</taxon>
        <taxon>Amoebozoa</taxon>
        <taxon>Evosea</taxon>
        <taxon>Eumycetozoa</taxon>
        <taxon>Dictyostelia</taxon>
        <taxon>Dictyosteliales</taxon>
        <taxon>Dictyosteliaceae</taxon>
        <taxon>Dictyostelium</taxon>
    </lineage>
</organism>